<accession>Q2GA15</accession>
<keyword id="KW-0342">GTP-binding</keyword>
<keyword id="KW-0547">Nucleotide-binding</keyword>
<keyword id="KW-1185">Reference proteome</keyword>
<keyword id="KW-0677">Repeat</keyword>
<keyword id="KW-0690">Ribosome biogenesis</keyword>
<protein>
    <recommendedName>
        <fullName evidence="1">GTPase Der</fullName>
    </recommendedName>
    <alternativeName>
        <fullName evidence="1">GTP-binding protein EngA</fullName>
    </alternativeName>
</protein>
<organism>
    <name type="scientific">Novosphingobium aromaticivorans (strain ATCC 700278 / DSM 12444 / CCUG 56034 / CIP 105152 / NBRC 16084 / F199)</name>
    <dbReference type="NCBI Taxonomy" id="279238"/>
    <lineage>
        <taxon>Bacteria</taxon>
        <taxon>Pseudomonadati</taxon>
        <taxon>Pseudomonadota</taxon>
        <taxon>Alphaproteobacteria</taxon>
        <taxon>Sphingomonadales</taxon>
        <taxon>Sphingomonadaceae</taxon>
        <taxon>Novosphingobium</taxon>
    </lineage>
</organism>
<gene>
    <name evidence="1" type="primary">der</name>
    <name type="synonym">engA</name>
    <name type="ordered locus">Saro_0863</name>
</gene>
<reference key="1">
    <citation type="submission" date="2006-01" db="EMBL/GenBank/DDBJ databases">
        <title>Complete sequence of Novosphingobium aromaticivorans DSM 12444.</title>
        <authorList>
            <consortium name="US DOE Joint Genome Institute"/>
            <person name="Copeland A."/>
            <person name="Lucas S."/>
            <person name="Lapidus A."/>
            <person name="Barry K."/>
            <person name="Detter J.C."/>
            <person name="Glavina T."/>
            <person name="Hammon N."/>
            <person name="Israni S."/>
            <person name="Pitluck S."/>
            <person name="Chain P."/>
            <person name="Malfatti S."/>
            <person name="Shin M."/>
            <person name="Vergez L."/>
            <person name="Schmutz J."/>
            <person name="Larimer F."/>
            <person name="Land M."/>
            <person name="Kyrpides N."/>
            <person name="Ivanova N."/>
            <person name="Fredrickson J."/>
            <person name="Balkwill D."/>
            <person name="Romine M.F."/>
            <person name="Richardson P."/>
        </authorList>
    </citation>
    <scope>NUCLEOTIDE SEQUENCE [LARGE SCALE GENOMIC DNA]</scope>
    <source>
        <strain>ATCC 700278 / DSM 12444 / CCUG 56034 / CIP 105152 / NBRC 16084 / F199</strain>
    </source>
</reference>
<comment type="function">
    <text evidence="1">GTPase that plays an essential role in the late steps of ribosome biogenesis.</text>
</comment>
<comment type="subunit">
    <text evidence="1">Associates with the 50S ribosomal subunit.</text>
</comment>
<comment type="similarity">
    <text evidence="1">Belongs to the TRAFAC class TrmE-Era-EngA-EngB-Septin-like GTPase superfamily. EngA (Der) GTPase family.</text>
</comment>
<feature type="chain" id="PRO_1000011682" description="GTPase Der">
    <location>
        <begin position="1"/>
        <end position="461"/>
    </location>
</feature>
<feature type="domain" description="EngA-type G 1">
    <location>
        <begin position="3"/>
        <end position="167"/>
    </location>
</feature>
<feature type="domain" description="EngA-type G 2">
    <location>
        <begin position="190"/>
        <end position="371"/>
    </location>
</feature>
<feature type="domain" description="KH-like" evidence="1">
    <location>
        <begin position="372"/>
        <end position="456"/>
    </location>
</feature>
<feature type="binding site" evidence="1">
    <location>
        <begin position="9"/>
        <end position="16"/>
    </location>
    <ligand>
        <name>GTP</name>
        <dbReference type="ChEBI" id="CHEBI:37565"/>
        <label>1</label>
    </ligand>
</feature>
<feature type="binding site" evidence="1">
    <location>
        <begin position="56"/>
        <end position="60"/>
    </location>
    <ligand>
        <name>GTP</name>
        <dbReference type="ChEBI" id="CHEBI:37565"/>
        <label>1</label>
    </ligand>
</feature>
<feature type="binding site" evidence="1">
    <location>
        <begin position="119"/>
        <end position="122"/>
    </location>
    <ligand>
        <name>GTP</name>
        <dbReference type="ChEBI" id="CHEBI:37565"/>
        <label>1</label>
    </ligand>
</feature>
<feature type="binding site" evidence="1">
    <location>
        <begin position="196"/>
        <end position="203"/>
    </location>
    <ligand>
        <name>GTP</name>
        <dbReference type="ChEBI" id="CHEBI:37565"/>
        <label>2</label>
    </ligand>
</feature>
<feature type="binding site" evidence="1">
    <location>
        <begin position="249"/>
        <end position="253"/>
    </location>
    <ligand>
        <name>GTP</name>
        <dbReference type="ChEBI" id="CHEBI:37565"/>
        <label>2</label>
    </ligand>
</feature>
<feature type="binding site" evidence="1">
    <location>
        <begin position="314"/>
        <end position="317"/>
    </location>
    <ligand>
        <name>GTP</name>
        <dbReference type="ChEBI" id="CHEBI:37565"/>
        <label>2</label>
    </ligand>
</feature>
<name>DER_NOVAD</name>
<proteinExistence type="inferred from homology"/>
<dbReference type="EMBL" id="CP000248">
    <property type="protein sequence ID" value="ABD25308.1"/>
    <property type="molecule type" value="Genomic_DNA"/>
</dbReference>
<dbReference type="RefSeq" id="WP_011444522.1">
    <property type="nucleotide sequence ID" value="NC_007794.1"/>
</dbReference>
<dbReference type="SMR" id="Q2GA15"/>
<dbReference type="STRING" id="279238.Saro_0863"/>
<dbReference type="KEGG" id="nar:Saro_0863"/>
<dbReference type="eggNOG" id="COG1160">
    <property type="taxonomic scope" value="Bacteria"/>
</dbReference>
<dbReference type="HOGENOM" id="CLU_016077_5_0_5"/>
<dbReference type="Proteomes" id="UP000009134">
    <property type="component" value="Chromosome"/>
</dbReference>
<dbReference type="GO" id="GO:0005525">
    <property type="term" value="F:GTP binding"/>
    <property type="evidence" value="ECO:0007669"/>
    <property type="project" value="UniProtKB-UniRule"/>
</dbReference>
<dbReference type="GO" id="GO:0042254">
    <property type="term" value="P:ribosome biogenesis"/>
    <property type="evidence" value="ECO:0007669"/>
    <property type="project" value="UniProtKB-KW"/>
</dbReference>
<dbReference type="CDD" id="cd01894">
    <property type="entry name" value="EngA1"/>
    <property type="match status" value="1"/>
</dbReference>
<dbReference type="CDD" id="cd01895">
    <property type="entry name" value="EngA2"/>
    <property type="match status" value="1"/>
</dbReference>
<dbReference type="FunFam" id="3.30.300.20:FF:000004">
    <property type="entry name" value="GTPase Der"/>
    <property type="match status" value="1"/>
</dbReference>
<dbReference type="Gene3D" id="3.30.300.20">
    <property type="match status" value="1"/>
</dbReference>
<dbReference type="Gene3D" id="3.40.50.300">
    <property type="entry name" value="P-loop containing nucleotide triphosphate hydrolases"/>
    <property type="match status" value="2"/>
</dbReference>
<dbReference type="HAMAP" id="MF_00195">
    <property type="entry name" value="GTPase_Der"/>
    <property type="match status" value="1"/>
</dbReference>
<dbReference type="InterPro" id="IPR031166">
    <property type="entry name" value="G_ENGA"/>
</dbReference>
<dbReference type="InterPro" id="IPR006073">
    <property type="entry name" value="GTP-bd"/>
</dbReference>
<dbReference type="InterPro" id="IPR016484">
    <property type="entry name" value="GTPase_Der"/>
</dbReference>
<dbReference type="InterPro" id="IPR032859">
    <property type="entry name" value="KH_dom-like"/>
</dbReference>
<dbReference type="InterPro" id="IPR015946">
    <property type="entry name" value="KH_dom-like_a/b"/>
</dbReference>
<dbReference type="InterPro" id="IPR027417">
    <property type="entry name" value="P-loop_NTPase"/>
</dbReference>
<dbReference type="InterPro" id="IPR005225">
    <property type="entry name" value="Small_GTP-bd"/>
</dbReference>
<dbReference type="NCBIfam" id="TIGR03594">
    <property type="entry name" value="GTPase_EngA"/>
    <property type="match status" value="1"/>
</dbReference>
<dbReference type="NCBIfam" id="TIGR00231">
    <property type="entry name" value="small_GTP"/>
    <property type="match status" value="2"/>
</dbReference>
<dbReference type="PANTHER" id="PTHR43834">
    <property type="entry name" value="GTPASE DER"/>
    <property type="match status" value="1"/>
</dbReference>
<dbReference type="PANTHER" id="PTHR43834:SF6">
    <property type="entry name" value="GTPASE DER"/>
    <property type="match status" value="1"/>
</dbReference>
<dbReference type="Pfam" id="PF14714">
    <property type="entry name" value="KH_dom-like"/>
    <property type="match status" value="1"/>
</dbReference>
<dbReference type="Pfam" id="PF01926">
    <property type="entry name" value="MMR_HSR1"/>
    <property type="match status" value="2"/>
</dbReference>
<dbReference type="PIRSF" id="PIRSF006485">
    <property type="entry name" value="GTP-binding_EngA"/>
    <property type="match status" value="1"/>
</dbReference>
<dbReference type="SUPFAM" id="SSF52540">
    <property type="entry name" value="P-loop containing nucleoside triphosphate hydrolases"/>
    <property type="match status" value="2"/>
</dbReference>
<dbReference type="PROSITE" id="PS51712">
    <property type="entry name" value="G_ENGA"/>
    <property type="match status" value="2"/>
</dbReference>
<sequence length="461" mass="50626">MRPQVIIIGRPNVGKSTLFNRLVGKKLALVDDQPGVTRDRRFGDASLLGLDFTIVDTAGWEDEDPSTLPGRMRKQTEASLVGADVALFVIDARAGVTPLDEEIARYLRQSTVPIVLMANKAEGRAGDPGIFEAFSLGFGEPVAFSAEHGQGLADLFEALLPLIGEKQDDEDGEGEEAEDEEEEFDPESVLKLAIVGRPNAGKSTLINKLLGEDRLLTGPEAGITRDSIAIDWQWFDPEREAYRPVRLIDTAGMRKKAQVTDKLEKLSVADARHAIDFAEVVVLVLDATRGLEHQDLKIASMVIEEGRALMIAINKWDVAEDPSGLFQGIRKALDEGLAQVRGVPLLAISGRTGKGLDELLKAAFEIRAAWSKRVPTAALNRWFDDALAANPPPAPGGRRIKLRYITQAKTRPPGFVLFGTRLDQLPESYRRYLINGIRRELGFDAVPIRLTLRSPKNPFAK</sequence>
<evidence type="ECO:0000255" key="1">
    <source>
        <dbReference type="HAMAP-Rule" id="MF_00195"/>
    </source>
</evidence>